<protein>
    <recommendedName>
        <fullName evidence="2">Protein-glucosylgalactosylhydroxylysine glucosidase</fullName>
        <ecNumber evidence="2">3.2.1.107</ecNumber>
    </recommendedName>
    <alternativeName>
        <fullName evidence="2">Acid trehalase-like protein 1</fullName>
    </alternativeName>
</protein>
<comment type="function">
    <text evidence="2">Catalyzes the hydrolysis of glucose from the disaccharide unit linked to hydroxylysine residues of collagen and collagen-like proteins.</text>
</comment>
<comment type="catalytic activity">
    <reaction evidence="2">
        <text>(5R)-5-O-[alpha-D-glucosyl-(1-&gt;2)-beta-D-galactosyl]-5-hydroxy-L-lysyl-[collagen] + H2O = (5R)-5-O-(beta-D-galactosyl)-5-hydroxy-L-lysyl-[collagen] + D-glucose</text>
        <dbReference type="Rhea" id="RHEA:11068"/>
        <dbReference type="Rhea" id="RHEA-COMP:12753"/>
        <dbReference type="Rhea" id="RHEA-COMP:12754"/>
        <dbReference type="ChEBI" id="CHEBI:4167"/>
        <dbReference type="ChEBI" id="CHEBI:15377"/>
        <dbReference type="ChEBI" id="CHEBI:133443"/>
        <dbReference type="ChEBI" id="CHEBI:133452"/>
        <dbReference type="EC" id="3.2.1.107"/>
    </reaction>
</comment>
<comment type="subcellular location">
    <subcellularLocation>
        <location evidence="4">Secreted</location>
    </subcellularLocation>
</comment>
<comment type="similarity">
    <text evidence="4">Belongs to the glycosyl hydrolase 65 family.</text>
</comment>
<feature type="signal peptide" evidence="3">
    <location>
        <begin position="1"/>
        <end position="21"/>
    </location>
</feature>
<feature type="chain" id="PRO_0000330917" description="Protein-glucosylgalactosylhydroxylysine glucosidase">
    <location>
        <begin position="22"/>
        <end position="713"/>
    </location>
</feature>
<feature type="active site" description="Proton donor" evidence="2">
    <location>
        <position position="451"/>
    </location>
</feature>
<feature type="binding site" evidence="1">
    <location>
        <begin position="317"/>
        <end position="318"/>
    </location>
    <ligand>
        <name>substrate</name>
    </ligand>
</feature>
<feature type="binding site" evidence="1">
    <location>
        <begin position="521"/>
        <end position="522"/>
    </location>
    <ligand>
        <name>substrate</name>
    </ligand>
</feature>
<feature type="glycosylation site" description="N-linked (GlcNAc...) asparagine" evidence="3">
    <location>
        <position position="104"/>
    </location>
</feature>
<feature type="glycosylation site" description="N-linked (GlcNAc...) asparagine" evidence="3">
    <location>
        <position position="160"/>
    </location>
</feature>
<feature type="glycosylation site" description="N-linked (GlcNAc...) asparagine" evidence="3">
    <location>
        <position position="171"/>
    </location>
</feature>
<feature type="glycosylation site" description="N-linked (GlcNAc...) asparagine" evidence="3">
    <location>
        <position position="186"/>
    </location>
</feature>
<feature type="glycosylation site" description="N-linked (GlcNAc...) asparagine" evidence="3">
    <location>
        <position position="283"/>
    </location>
</feature>
<feature type="glycosylation site" description="N-linked (GlcNAc...) asparagine" evidence="3">
    <location>
        <position position="361"/>
    </location>
</feature>
<feature type="glycosylation site" description="N-linked (GlcNAc...) asparagine" evidence="3">
    <location>
        <position position="457"/>
    </location>
</feature>
<feature type="glycosylation site" description="N-linked (GlcNAc...) asparagine" evidence="3">
    <location>
        <position position="481"/>
    </location>
</feature>
<feature type="glycosylation site" description="N-linked (GlcNAc...) asparagine" evidence="3">
    <location>
        <position position="535"/>
    </location>
</feature>
<feature type="glycosylation site" description="N-linked (GlcNAc...) asparagine" evidence="3">
    <location>
        <position position="576"/>
    </location>
</feature>
<feature type="glycosylation site" description="N-linked (GlcNAc...) asparagine" evidence="3">
    <location>
        <position position="662"/>
    </location>
</feature>
<accession>Q54KX5</accession>
<organism>
    <name type="scientific">Dictyostelium discoideum</name>
    <name type="common">Social amoeba</name>
    <dbReference type="NCBI Taxonomy" id="44689"/>
    <lineage>
        <taxon>Eukaryota</taxon>
        <taxon>Amoebozoa</taxon>
        <taxon>Evosea</taxon>
        <taxon>Eumycetozoa</taxon>
        <taxon>Dictyostelia</taxon>
        <taxon>Dictyosteliales</taxon>
        <taxon>Dictyosteliaceae</taxon>
        <taxon>Dictyostelium</taxon>
    </lineage>
</organism>
<proteinExistence type="inferred from homology"/>
<evidence type="ECO:0000250" key="1">
    <source>
        <dbReference type="UniProtKB" id="D6XZ22"/>
    </source>
</evidence>
<evidence type="ECO:0000250" key="2">
    <source>
        <dbReference type="UniProtKB" id="Q32M88"/>
    </source>
</evidence>
<evidence type="ECO:0000255" key="3"/>
<evidence type="ECO:0000305" key="4"/>
<dbReference type="EC" id="3.2.1.107" evidence="2"/>
<dbReference type="EMBL" id="AAFI02000096">
    <property type="protein sequence ID" value="EAL63919.2"/>
    <property type="molecule type" value="Genomic_DNA"/>
</dbReference>
<dbReference type="RefSeq" id="XP_637395.2">
    <property type="nucleotide sequence ID" value="XM_632303.2"/>
</dbReference>
<dbReference type="SMR" id="Q54KX5"/>
<dbReference type="STRING" id="44689.Q54KX5"/>
<dbReference type="GlyCosmos" id="Q54KX5">
    <property type="glycosylation" value="11 sites, No reported glycans"/>
</dbReference>
<dbReference type="GlyGen" id="Q54KX5">
    <property type="glycosylation" value="11 sites"/>
</dbReference>
<dbReference type="PaxDb" id="44689-DDB0266682"/>
<dbReference type="EnsemblProtists" id="EAL63919">
    <property type="protein sequence ID" value="EAL63919"/>
    <property type="gene ID" value="DDB_G0287109"/>
</dbReference>
<dbReference type="GeneID" id="8625926"/>
<dbReference type="KEGG" id="ddi:DDB_G0287109"/>
<dbReference type="dictyBase" id="DDB_G0287109">
    <property type="gene designation" value="athl1"/>
</dbReference>
<dbReference type="VEuPathDB" id="AmoebaDB:DDB_G0287109"/>
<dbReference type="eggNOG" id="KOG4125">
    <property type="taxonomic scope" value="Eukaryota"/>
</dbReference>
<dbReference type="HOGENOM" id="CLU_006285_4_2_1"/>
<dbReference type="InParanoid" id="Q54KX5"/>
<dbReference type="OMA" id="PAMTYSM"/>
<dbReference type="PhylomeDB" id="Q54KX5"/>
<dbReference type="PRO" id="PR:Q54KX5"/>
<dbReference type="Proteomes" id="UP000002195">
    <property type="component" value="Chromosome 4"/>
</dbReference>
<dbReference type="GO" id="GO:0005576">
    <property type="term" value="C:extracellular region"/>
    <property type="evidence" value="ECO:0007669"/>
    <property type="project" value="UniProtKB-SubCell"/>
</dbReference>
<dbReference type="GO" id="GO:0004553">
    <property type="term" value="F:hydrolase activity, hydrolyzing O-glycosyl compounds"/>
    <property type="evidence" value="ECO:0000318"/>
    <property type="project" value="GO_Central"/>
</dbReference>
<dbReference type="GO" id="GO:0047402">
    <property type="term" value="F:protein-glucosylgalactosylhydroxylysine glucosidase activity"/>
    <property type="evidence" value="ECO:0007669"/>
    <property type="project" value="UniProtKB-EC"/>
</dbReference>
<dbReference type="GO" id="GO:0005975">
    <property type="term" value="P:carbohydrate metabolic process"/>
    <property type="evidence" value="ECO:0000318"/>
    <property type="project" value="GO_Central"/>
</dbReference>
<dbReference type="FunFam" id="1.50.10.10:FF:000023">
    <property type="entry name" value="Protein-glucosylgalactosylhydroxylysine glucosidase"/>
    <property type="match status" value="1"/>
</dbReference>
<dbReference type="FunFam" id="2.60.420.10:FF:000003">
    <property type="entry name" value="Protein-glucosylgalactosylhydroxylysine glucosidase"/>
    <property type="match status" value="1"/>
</dbReference>
<dbReference type="Gene3D" id="1.50.10.10">
    <property type="match status" value="1"/>
</dbReference>
<dbReference type="Gene3D" id="2.60.420.10">
    <property type="entry name" value="Maltose phosphorylase, domain 3"/>
    <property type="match status" value="1"/>
</dbReference>
<dbReference type="InterPro" id="IPR008928">
    <property type="entry name" value="6-hairpin_glycosidase_sf"/>
</dbReference>
<dbReference type="InterPro" id="IPR012341">
    <property type="entry name" value="6hp_glycosidase-like_sf"/>
</dbReference>
<dbReference type="InterPro" id="IPR005194">
    <property type="entry name" value="Glyco_hydro_65_C"/>
</dbReference>
<dbReference type="InterPro" id="IPR005195">
    <property type="entry name" value="Glyco_hydro_65_M"/>
</dbReference>
<dbReference type="PANTHER" id="PTHR11051">
    <property type="entry name" value="GLYCOSYL HYDROLASE-RELATED"/>
    <property type="match status" value="1"/>
</dbReference>
<dbReference type="PANTHER" id="PTHR11051:SF8">
    <property type="entry name" value="PROTEIN-GLUCOSYLGALACTOSYLHYDROXYLYSINE GLUCOSIDASE"/>
    <property type="match status" value="1"/>
</dbReference>
<dbReference type="Pfam" id="PF03633">
    <property type="entry name" value="Glyco_hydro_65C"/>
    <property type="match status" value="1"/>
</dbReference>
<dbReference type="Pfam" id="PF03632">
    <property type="entry name" value="Glyco_hydro_65m"/>
    <property type="match status" value="1"/>
</dbReference>
<dbReference type="SUPFAM" id="SSF48208">
    <property type="entry name" value="Six-hairpin glycosidases"/>
    <property type="match status" value="1"/>
</dbReference>
<name>PGGHG_DICDI</name>
<sequence length="713" mass="80522">MIINSQEYLQPPQWWNERVEAGNLLSISNGEQEPTNYLMTNVGNGYVAFVIGGESIYVGGVYNGPAINLGDANNLPSHRAGIPNFQNIEISNAQFQYAGLDIENATYTRVYSIPSSPGTIVKQIFYAHQKIRNILVQEIEVDNSNIETDVTLQLSVVGINLTANVDFNILNLTNTQFTGNDYQLYNLTIKVPEVNFMTSVAVTTTTIPQSITIKSGEKKKHHYVTSFLTNIETNDYIEGSLDIYKTTFLLADQLIKSHLDEWNKIWISGIEVGGDSHLQQVVNSSLYYLFSSIRDDWSYGMSPGGLASDGYNGHSFWDTETWMLPPILLLNPKLVRDCLLQYRINNLPGAHEKALSYKSNNYTGFMFPWESAFTGIEVCPTFAPTGILEQHITADIALAIRQYYYLTGDLDWLIDFGYKALKGIAEFWASRVEYDQLNQQYSINTIIPPDEYAVGVNNSVYTNVAVKMTFEWVIEVATLINDTENIPFEHWSSIANGLVILFDEVNQWHPEYQGYNGETIKQADVVLLGFPLMYNMSKEARKNDLIYYEAVTTNSGPAMTYSMHTVAWLELESLENATKQWFRSYNNCNNSPFLVWTETPTGGAVNFATGMGGFLQGLMFGYGGVRIHQGNLDFYPQLPEGTTSLKIRSMNYIGSTFNVGWNQTTITFEMLTFNPSVYLTLLSTEYDNIILNTLDPIYLTFGSKFQIYFNNNN</sequence>
<reference key="1">
    <citation type="journal article" date="2005" name="Nature">
        <title>The genome of the social amoeba Dictyostelium discoideum.</title>
        <authorList>
            <person name="Eichinger L."/>
            <person name="Pachebat J.A."/>
            <person name="Gloeckner G."/>
            <person name="Rajandream M.A."/>
            <person name="Sucgang R."/>
            <person name="Berriman M."/>
            <person name="Song J."/>
            <person name="Olsen R."/>
            <person name="Szafranski K."/>
            <person name="Xu Q."/>
            <person name="Tunggal B."/>
            <person name="Kummerfeld S."/>
            <person name="Madera M."/>
            <person name="Konfortov B.A."/>
            <person name="Rivero F."/>
            <person name="Bankier A.T."/>
            <person name="Lehmann R."/>
            <person name="Hamlin N."/>
            <person name="Davies R."/>
            <person name="Gaudet P."/>
            <person name="Fey P."/>
            <person name="Pilcher K."/>
            <person name="Chen G."/>
            <person name="Saunders D."/>
            <person name="Sodergren E.J."/>
            <person name="Davis P."/>
            <person name="Kerhornou A."/>
            <person name="Nie X."/>
            <person name="Hall N."/>
            <person name="Anjard C."/>
            <person name="Hemphill L."/>
            <person name="Bason N."/>
            <person name="Farbrother P."/>
            <person name="Desany B."/>
            <person name="Just E."/>
            <person name="Morio T."/>
            <person name="Rost R."/>
            <person name="Churcher C.M."/>
            <person name="Cooper J."/>
            <person name="Haydock S."/>
            <person name="van Driessche N."/>
            <person name="Cronin A."/>
            <person name="Goodhead I."/>
            <person name="Muzny D.M."/>
            <person name="Mourier T."/>
            <person name="Pain A."/>
            <person name="Lu M."/>
            <person name="Harper D."/>
            <person name="Lindsay R."/>
            <person name="Hauser H."/>
            <person name="James K.D."/>
            <person name="Quiles M."/>
            <person name="Madan Babu M."/>
            <person name="Saito T."/>
            <person name="Buchrieser C."/>
            <person name="Wardroper A."/>
            <person name="Felder M."/>
            <person name="Thangavelu M."/>
            <person name="Johnson D."/>
            <person name="Knights A."/>
            <person name="Loulseged H."/>
            <person name="Mungall K.L."/>
            <person name="Oliver K."/>
            <person name="Price C."/>
            <person name="Quail M.A."/>
            <person name="Urushihara H."/>
            <person name="Hernandez J."/>
            <person name="Rabbinowitsch E."/>
            <person name="Steffen D."/>
            <person name="Sanders M."/>
            <person name="Ma J."/>
            <person name="Kohara Y."/>
            <person name="Sharp S."/>
            <person name="Simmonds M.N."/>
            <person name="Spiegler S."/>
            <person name="Tivey A."/>
            <person name="Sugano S."/>
            <person name="White B."/>
            <person name="Walker D."/>
            <person name="Woodward J.R."/>
            <person name="Winckler T."/>
            <person name="Tanaka Y."/>
            <person name="Shaulsky G."/>
            <person name="Schleicher M."/>
            <person name="Weinstock G.M."/>
            <person name="Rosenthal A."/>
            <person name="Cox E.C."/>
            <person name="Chisholm R.L."/>
            <person name="Gibbs R.A."/>
            <person name="Loomis W.F."/>
            <person name="Platzer M."/>
            <person name="Kay R.R."/>
            <person name="Williams J.G."/>
            <person name="Dear P.H."/>
            <person name="Noegel A.A."/>
            <person name="Barrell B.G."/>
            <person name="Kuspa A."/>
        </authorList>
    </citation>
    <scope>NUCLEOTIDE SEQUENCE [LARGE SCALE GENOMIC DNA]</scope>
    <source>
        <strain>AX4</strain>
    </source>
</reference>
<keyword id="KW-0325">Glycoprotein</keyword>
<keyword id="KW-0326">Glycosidase</keyword>
<keyword id="KW-0378">Hydrolase</keyword>
<keyword id="KW-1185">Reference proteome</keyword>
<keyword id="KW-0964">Secreted</keyword>
<keyword id="KW-0732">Signal</keyword>
<gene>
    <name evidence="2" type="primary">pgghg</name>
    <name type="synonym">athl1</name>
    <name type="ORF">DDB_G0287109</name>
</gene>